<reference key="1">
    <citation type="online journal article" date="1996" name="Plant Gene Register">
        <title>A full-length cDNA coding for phenylalanine ammonia-lyase from Citrus limon.</title>
        <authorList>
            <person name="Seelenfreund D."/>
            <person name="Chiong M."/>
            <person name="Lobos S."/>
            <person name="Perez L.M."/>
        </authorList>
        <locator>PGR96-026</locator>
    </citation>
    <scope>NUCLEOTIDE SEQUENCE [MRNA]</scope>
</reference>
<keyword id="KW-0963">Cytoplasm</keyword>
<keyword id="KW-0456">Lyase</keyword>
<keyword id="KW-0585">Phenylalanine catabolism</keyword>
<keyword id="KW-0587">Phenylpropanoid metabolism</keyword>
<evidence type="ECO:0000250" key="1">
    <source>
        <dbReference type="UniProtKB" id="P11544"/>
    </source>
</evidence>
<evidence type="ECO:0000250" key="2">
    <source>
        <dbReference type="UniProtKB" id="P24481"/>
    </source>
</evidence>
<evidence type="ECO:0000250" key="3">
    <source>
        <dbReference type="UniProtKB" id="Q68G84"/>
    </source>
</evidence>
<evidence type="ECO:0000255" key="4">
    <source>
        <dbReference type="PROSITE-ProRule" id="PRU10122"/>
    </source>
</evidence>
<evidence type="ECO:0000305" key="5"/>
<protein>
    <recommendedName>
        <fullName>Phenylalanine ammonia-lyase</fullName>
        <ecNumber evidence="2">4.3.1.24</ecNumber>
    </recommendedName>
</protein>
<name>PALY_CITLI</name>
<comment type="function">
    <text evidence="2">This is a key enzyme of plant metabolism catalyzing the first reaction in the biosynthesis from L-phenylalanine of a wide variety of natural products based on the phenylpropane skeleton.</text>
</comment>
<comment type="catalytic activity">
    <reaction evidence="2">
        <text>L-phenylalanine = (E)-cinnamate + NH4(+)</text>
        <dbReference type="Rhea" id="RHEA:21384"/>
        <dbReference type="ChEBI" id="CHEBI:15669"/>
        <dbReference type="ChEBI" id="CHEBI:28938"/>
        <dbReference type="ChEBI" id="CHEBI:58095"/>
        <dbReference type="EC" id="4.3.1.24"/>
    </reaction>
</comment>
<comment type="pathway">
    <text evidence="5">Phenylpropanoid metabolism; trans-cinnamate biosynthesis; trans-cinnamate from L-phenylalanine: step 1/1.</text>
</comment>
<comment type="subunit">
    <text evidence="2">Homotetramer.</text>
</comment>
<comment type="subcellular location">
    <subcellularLocation>
        <location evidence="5">Cytoplasm</location>
    </subcellularLocation>
</comment>
<comment type="PTM">
    <text evidence="3">Contains an active site 4-methylidene-imidazol-5-one (MIO), which is formed autocatalytically by cyclization and dehydration of residues Ala-Ser-Gly.</text>
</comment>
<comment type="similarity">
    <text evidence="5">Belongs to the PAL/histidase family.</text>
</comment>
<dbReference type="EC" id="4.3.1.24" evidence="2"/>
<dbReference type="EMBL" id="U43338">
    <property type="protein sequence ID" value="AAB67733.1"/>
    <property type="molecule type" value="mRNA"/>
</dbReference>
<dbReference type="SMR" id="Q42667"/>
<dbReference type="UniPathway" id="UPA00713">
    <property type="reaction ID" value="UER00725"/>
</dbReference>
<dbReference type="GO" id="GO:0005737">
    <property type="term" value="C:cytoplasm"/>
    <property type="evidence" value="ECO:0007669"/>
    <property type="project" value="UniProtKB-SubCell"/>
</dbReference>
<dbReference type="GO" id="GO:0045548">
    <property type="term" value="F:phenylalanine ammonia-lyase activity"/>
    <property type="evidence" value="ECO:0007669"/>
    <property type="project" value="UniProtKB-EC"/>
</dbReference>
<dbReference type="GO" id="GO:0009800">
    <property type="term" value="P:cinnamic acid biosynthetic process"/>
    <property type="evidence" value="ECO:0007669"/>
    <property type="project" value="UniProtKB-UniPathway"/>
</dbReference>
<dbReference type="GO" id="GO:0006559">
    <property type="term" value="P:L-phenylalanine catabolic process"/>
    <property type="evidence" value="ECO:0007669"/>
    <property type="project" value="UniProtKB-KW"/>
</dbReference>
<dbReference type="CDD" id="cd00332">
    <property type="entry name" value="PAL-HAL"/>
    <property type="match status" value="1"/>
</dbReference>
<dbReference type="FunFam" id="1.10.274.20:FF:000001">
    <property type="entry name" value="Phenylalanine ammonia-lyase"/>
    <property type="match status" value="1"/>
</dbReference>
<dbReference type="FunFam" id="1.10.275.10:FF:000009">
    <property type="entry name" value="Phenylalanine ammonia-lyase"/>
    <property type="match status" value="1"/>
</dbReference>
<dbReference type="FunFam" id="1.20.200.10:FF:000009">
    <property type="entry name" value="Phenylalanine ammonia-lyase"/>
    <property type="match status" value="1"/>
</dbReference>
<dbReference type="Gene3D" id="1.20.200.10">
    <property type="entry name" value="Fumarase/aspartase (Central domain)"/>
    <property type="match status" value="1"/>
</dbReference>
<dbReference type="Gene3D" id="1.10.275.10">
    <property type="entry name" value="Fumarase/aspartase (N-terminal domain)"/>
    <property type="match status" value="1"/>
</dbReference>
<dbReference type="Gene3D" id="1.10.274.20">
    <property type="entry name" value="Phenylalanine ammonia-lyase 1, domain 3"/>
    <property type="match status" value="1"/>
</dbReference>
<dbReference type="InterPro" id="IPR001106">
    <property type="entry name" value="Aromatic_Lyase"/>
</dbReference>
<dbReference type="InterPro" id="IPR024083">
    <property type="entry name" value="Fumarase/histidase_N"/>
</dbReference>
<dbReference type="InterPro" id="IPR008948">
    <property type="entry name" value="L-Aspartase-like"/>
</dbReference>
<dbReference type="InterPro" id="IPR022313">
    <property type="entry name" value="Phe/His_NH3-lyase_AS"/>
</dbReference>
<dbReference type="InterPro" id="IPR005922">
    <property type="entry name" value="Phe_NH3-lyase"/>
</dbReference>
<dbReference type="InterPro" id="IPR023144">
    <property type="entry name" value="Phe_NH3-lyase_shielding_dom_sf"/>
</dbReference>
<dbReference type="NCBIfam" id="TIGR01226">
    <property type="entry name" value="phe_am_lyase"/>
    <property type="match status" value="1"/>
</dbReference>
<dbReference type="PANTHER" id="PTHR10362">
    <property type="entry name" value="HISTIDINE AMMONIA-LYASE"/>
    <property type="match status" value="1"/>
</dbReference>
<dbReference type="Pfam" id="PF00221">
    <property type="entry name" value="Lyase_aromatic"/>
    <property type="match status" value="1"/>
</dbReference>
<dbReference type="SUPFAM" id="SSF48557">
    <property type="entry name" value="L-aspartase-like"/>
    <property type="match status" value="1"/>
</dbReference>
<dbReference type="PROSITE" id="PS00488">
    <property type="entry name" value="PAL_HISTIDASE"/>
    <property type="match status" value="1"/>
</dbReference>
<accession>Q42667</accession>
<proteinExistence type="evidence at transcript level"/>
<sequence>MELSHETCNGIKNDRNGGTSSLGLCTGTDPLNWTVAADSLKGSHLDEVKRMIDEYRRPVVKLGGESLTIGQVTAIAAHDSGVKVELAEAARAGVKASSDWVMDSMMKGTDSYGVTTGFGATSHRRTKQGGALQKELIRFLNSGIFGNGTESSHTLPHSATRAAMLVRVNTLLQGYSGIRFEILETITKFLNHNITPCLPLRGTITASGDLVPLSYIAGLLTGRPNSKAVGSNGQVLNPTEAFNLAGVTSGFFELQPKEGLALVNGTAVGSGLAATVLFEANILAIMSEVLSAIFAEVMNGKPEFTDHLTHKLKHHPGQIEAAAIMEHILDGSSYVKAAQKLHETDPLQKPKQDRYALRTSPQWLGPQIEVIRAATKMIEREINSVNDNPLIDVSRNKALHGGNFQGTPIGVSMDNTRLAIASIGKLMFAQFSELVNDFYNNGLPSNLTGGRNPSLDYGFKGAEIAMASYCSELQFLANPVTNHVQSAEQHNQDVNSLGLNSSRKTAEAVDILKLMSSTFLVALCQAIDLRHLEENLKNTVKNTVSQVAKRVLTMGVNGELHPSRFCEKDLIKVVDREYVFAYIDDPCSASSPLMQKLRQVLVDHALDNGDREKNSTTSIFQKIGAFEDELKTLLPKEVEIARTELESGNAAIPNRIKECRSYPLYKIVREDIGTSLLTGEKVRSPGEEFDKVFTAMCEGKLIDPMLECLKEWNGAPLPICQN</sequence>
<feature type="chain" id="PRO_0000215389" description="Phenylalanine ammonia-lyase">
    <location>
        <begin position="1"/>
        <end position="722"/>
    </location>
</feature>
<feature type="active site" description="Proton donor/acceptor" evidence="3">
    <location>
        <position position="112"/>
    </location>
</feature>
<feature type="binding site" evidence="3">
    <location>
        <position position="264"/>
    </location>
    <ligand>
        <name>(E)-cinnamate</name>
        <dbReference type="ChEBI" id="CHEBI:15669"/>
    </ligand>
</feature>
<feature type="binding site" evidence="3">
    <location>
        <position position="352"/>
    </location>
    <ligand>
        <name>(E)-cinnamate</name>
        <dbReference type="ChEBI" id="CHEBI:15669"/>
    </ligand>
</feature>
<feature type="binding site" evidence="3">
    <location>
        <position position="358"/>
    </location>
    <ligand>
        <name>(E)-cinnamate</name>
        <dbReference type="ChEBI" id="CHEBI:15669"/>
    </ligand>
</feature>
<feature type="binding site" evidence="3">
    <location>
        <position position="388"/>
    </location>
    <ligand>
        <name>(E)-cinnamate</name>
        <dbReference type="ChEBI" id="CHEBI:15669"/>
    </ligand>
</feature>
<feature type="binding site" evidence="1">
    <location>
        <position position="460"/>
    </location>
    <ligand>
        <name>(E)-cinnamate</name>
        <dbReference type="ChEBI" id="CHEBI:15669"/>
    </ligand>
</feature>
<feature type="binding site" evidence="1">
    <location>
        <position position="488"/>
    </location>
    <ligand>
        <name>(E)-cinnamate</name>
        <dbReference type="ChEBI" id="CHEBI:15669"/>
    </ligand>
</feature>
<feature type="binding site" evidence="3">
    <location>
        <position position="491"/>
    </location>
    <ligand>
        <name>(E)-cinnamate</name>
        <dbReference type="ChEBI" id="CHEBI:15669"/>
    </ligand>
</feature>
<feature type="modified residue" description="2,3-didehydroalanine (Ser)" evidence="4">
    <location>
        <position position="207"/>
    </location>
</feature>
<feature type="cross-link" description="5-imidazolinone (Ala-Gly)" evidence="3">
    <location>
        <begin position="206"/>
        <end position="208"/>
    </location>
</feature>
<gene>
    <name type="primary">PAL6</name>
</gene>
<organism>
    <name type="scientific">Citrus limon</name>
    <name type="common">Lemon</name>
    <name type="synonym">Citrus medica var. limon</name>
    <dbReference type="NCBI Taxonomy" id="2708"/>
    <lineage>
        <taxon>Eukaryota</taxon>
        <taxon>Viridiplantae</taxon>
        <taxon>Streptophyta</taxon>
        <taxon>Embryophyta</taxon>
        <taxon>Tracheophyta</taxon>
        <taxon>Spermatophyta</taxon>
        <taxon>Magnoliopsida</taxon>
        <taxon>eudicotyledons</taxon>
        <taxon>Gunneridae</taxon>
        <taxon>Pentapetalae</taxon>
        <taxon>rosids</taxon>
        <taxon>malvids</taxon>
        <taxon>Sapindales</taxon>
        <taxon>Rutaceae</taxon>
        <taxon>Aurantioideae</taxon>
        <taxon>Citrus</taxon>
    </lineage>
</organism>